<gene>
    <name evidence="1" type="primary">purE</name>
    <name type="ordered locus">MT3375</name>
</gene>
<organism>
    <name type="scientific">Mycobacterium tuberculosis (strain CDC 1551 / Oshkosh)</name>
    <dbReference type="NCBI Taxonomy" id="83331"/>
    <lineage>
        <taxon>Bacteria</taxon>
        <taxon>Bacillati</taxon>
        <taxon>Actinomycetota</taxon>
        <taxon>Actinomycetes</taxon>
        <taxon>Mycobacteriales</taxon>
        <taxon>Mycobacteriaceae</taxon>
        <taxon>Mycobacterium</taxon>
        <taxon>Mycobacterium tuberculosis complex</taxon>
    </lineage>
</organism>
<comment type="function">
    <text evidence="1">Catalyzes the conversion of N5-carboxyaminoimidazole ribonucleotide (N5-CAIR) to 4-carboxy-5-aminoimidazole ribonucleotide (CAIR).</text>
</comment>
<comment type="catalytic activity">
    <reaction evidence="1">
        <text>5-carboxyamino-1-(5-phospho-D-ribosyl)imidazole + H(+) = 5-amino-1-(5-phospho-D-ribosyl)imidazole-4-carboxylate</text>
        <dbReference type="Rhea" id="RHEA:13193"/>
        <dbReference type="ChEBI" id="CHEBI:15378"/>
        <dbReference type="ChEBI" id="CHEBI:58730"/>
        <dbReference type="ChEBI" id="CHEBI:77657"/>
        <dbReference type="EC" id="5.4.99.18"/>
    </reaction>
</comment>
<comment type="pathway">
    <text evidence="1">Purine metabolism; IMP biosynthesis via de novo pathway; 5-amino-1-(5-phospho-D-ribosyl)imidazole-4-carboxylate from 5-amino-1-(5-phospho-D-ribosyl)imidazole (N5-CAIR route): step 2/2.</text>
</comment>
<comment type="similarity">
    <text evidence="1">Belongs to the AIR carboxylase family. Class I subfamily.</text>
</comment>
<name>PURE_MYCTO</name>
<dbReference type="EC" id="5.4.99.18" evidence="1"/>
<dbReference type="EMBL" id="AE000516">
    <property type="protein sequence ID" value="AAK47716.1"/>
    <property type="molecule type" value="Genomic_DNA"/>
</dbReference>
<dbReference type="PIR" id="D70979">
    <property type="entry name" value="D70979"/>
</dbReference>
<dbReference type="RefSeq" id="WP_003899997.1">
    <property type="nucleotide sequence ID" value="NZ_KK341227.1"/>
</dbReference>
<dbReference type="SMR" id="P9WHM0"/>
<dbReference type="KEGG" id="mtc:MT3375"/>
<dbReference type="PATRIC" id="fig|83331.31.peg.3632"/>
<dbReference type="HOGENOM" id="CLU_094982_2_0_11"/>
<dbReference type="UniPathway" id="UPA00074">
    <property type="reaction ID" value="UER00943"/>
</dbReference>
<dbReference type="Proteomes" id="UP000001020">
    <property type="component" value="Chromosome"/>
</dbReference>
<dbReference type="GO" id="GO:0034023">
    <property type="term" value="F:5-(carboxyamino)imidazole ribonucleotide mutase activity"/>
    <property type="evidence" value="ECO:0007669"/>
    <property type="project" value="UniProtKB-UniRule"/>
</dbReference>
<dbReference type="GO" id="GO:0006189">
    <property type="term" value="P:'de novo' IMP biosynthetic process"/>
    <property type="evidence" value="ECO:0007669"/>
    <property type="project" value="UniProtKB-UniRule"/>
</dbReference>
<dbReference type="Gene3D" id="3.40.50.1970">
    <property type="match status" value="1"/>
</dbReference>
<dbReference type="HAMAP" id="MF_01929">
    <property type="entry name" value="PurE_classI"/>
    <property type="match status" value="1"/>
</dbReference>
<dbReference type="InterPro" id="IPR033747">
    <property type="entry name" value="PurE_ClassI"/>
</dbReference>
<dbReference type="InterPro" id="IPR000031">
    <property type="entry name" value="PurE_dom"/>
</dbReference>
<dbReference type="InterPro" id="IPR024694">
    <property type="entry name" value="PurE_prokaryotes"/>
</dbReference>
<dbReference type="NCBIfam" id="TIGR01162">
    <property type="entry name" value="purE"/>
    <property type="match status" value="1"/>
</dbReference>
<dbReference type="PANTHER" id="PTHR23046:SF2">
    <property type="entry name" value="PHOSPHORIBOSYLAMINOIMIDAZOLE CARBOXYLASE"/>
    <property type="match status" value="1"/>
</dbReference>
<dbReference type="PANTHER" id="PTHR23046">
    <property type="entry name" value="PHOSPHORIBOSYLAMINOIMIDAZOLE CARBOXYLASE CATALYTIC SUBUNIT"/>
    <property type="match status" value="1"/>
</dbReference>
<dbReference type="Pfam" id="PF00731">
    <property type="entry name" value="AIRC"/>
    <property type="match status" value="1"/>
</dbReference>
<dbReference type="PIRSF" id="PIRSF001338">
    <property type="entry name" value="AIR_carboxylase"/>
    <property type="match status" value="1"/>
</dbReference>
<dbReference type="SMART" id="SM01001">
    <property type="entry name" value="AIRC"/>
    <property type="match status" value="1"/>
</dbReference>
<dbReference type="SUPFAM" id="SSF52255">
    <property type="entry name" value="N5-CAIR mutase (phosphoribosylaminoimidazole carboxylase, PurE)"/>
    <property type="match status" value="1"/>
</dbReference>
<keyword id="KW-0413">Isomerase</keyword>
<keyword id="KW-0658">Purine biosynthesis</keyword>
<keyword id="KW-1185">Reference proteome</keyword>
<feature type="chain" id="PRO_0000428161" description="N5-carboxyaminoimidazole ribonucleotide mutase">
    <location>
        <begin position="1"/>
        <end position="174"/>
    </location>
</feature>
<feature type="binding site" evidence="1">
    <location>
        <position position="16"/>
    </location>
    <ligand>
        <name>substrate</name>
    </ligand>
</feature>
<feature type="binding site" evidence="1">
    <location>
        <position position="19"/>
    </location>
    <ligand>
        <name>substrate</name>
    </ligand>
</feature>
<feature type="binding site" evidence="1">
    <location>
        <position position="46"/>
    </location>
    <ligand>
        <name>substrate</name>
    </ligand>
</feature>
<accession>P9WHM0</accession>
<accession>L0TF53</accession>
<accession>P96880</accession>
<evidence type="ECO:0000255" key="1">
    <source>
        <dbReference type="HAMAP-Rule" id="MF_01929"/>
    </source>
</evidence>
<protein>
    <recommendedName>
        <fullName evidence="1">N5-carboxyaminoimidazole ribonucleotide mutase</fullName>
        <shortName evidence="1">N5-CAIR mutase</shortName>
        <ecNumber evidence="1">5.4.99.18</ecNumber>
    </recommendedName>
    <alternativeName>
        <fullName evidence="1">5-(carboxyamino)imidazole ribonucleotide mutase</fullName>
    </alternativeName>
</protein>
<sequence>MTPAGERPRVGVIMGSDSDWPVMADAAAALAEFDIPAEVRVVSAHRTPEAMFSYARGAAERGLEVIIAGAGGAAHLPGMVAAATPLPVIGVPVPLGRLDGLDSLLSIVQMPAGVPVATVSIGGAGNAGLLAVRMLGAANPQLRARIVAFQDRLADVVAAKDAELQRLAGKLTRD</sequence>
<reference key="1">
    <citation type="journal article" date="2002" name="J. Bacteriol.">
        <title>Whole-genome comparison of Mycobacterium tuberculosis clinical and laboratory strains.</title>
        <authorList>
            <person name="Fleischmann R.D."/>
            <person name="Alland D."/>
            <person name="Eisen J.A."/>
            <person name="Carpenter L."/>
            <person name="White O."/>
            <person name="Peterson J.D."/>
            <person name="DeBoy R.T."/>
            <person name="Dodson R.J."/>
            <person name="Gwinn M.L."/>
            <person name="Haft D.H."/>
            <person name="Hickey E.K."/>
            <person name="Kolonay J.F."/>
            <person name="Nelson W.C."/>
            <person name="Umayam L.A."/>
            <person name="Ermolaeva M.D."/>
            <person name="Salzberg S.L."/>
            <person name="Delcher A."/>
            <person name="Utterback T.R."/>
            <person name="Weidman J.F."/>
            <person name="Khouri H.M."/>
            <person name="Gill J."/>
            <person name="Mikula A."/>
            <person name="Bishai W."/>
            <person name="Jacobs W.R. Jr."/>
            <person name="Venter J.C."/>
            <person name="Fraser C.M."/>
        </authorList>
    </citation>
    <scope>NUCLEOTIDE SEQUENCE [LARGE SCALE GENOMIC DNA]</scope>
    <source>
        <strain>CDC 1551 / Oshkosh</strain>
    </source>
</reference>
<proteinExistence type="inferred from homology"/>